<feature type="chain" id="PRO_0000234388" description="Calcium release-activated calcium channel protein 1">
    <location>
        <begin position="1"/>
        <end position="351"/>
    </location>
</feature>
<feature type="topological domain" description="Cytoplasmic" evidence="3">
    <location>
        <begin position="1"/>
        <end position="163"/>
    </location>
</feature>
<feature type="transmembrane region" description="Helical" evidence="3">
    <location>
        <begin position="164"/>
        <end position="181"/>
    </location>
</feature>
<feature type="topological domain" description="Extracellular" evidence="3">
    <location>
        <begin position="182"/>
        <end position="191"/>
    </location>
</feature>
<feature type="transmembrane region" description="Helical" evidence="3">
    <location>
        <begin position="192"/>
        <end position="212"/>
    </location>
</feature>
<feature type="topological domain" description="Cytoplasmic" evidence="3">
    <location>
        <begin position="213"/>
        <end position="248"/>
    </location>
</feature>
<feature type="transmembrane region" description="Helical" evidence="3">
    <location>
        <begin position="249"/>
        <end position="269"/>
    </location>
</feature>
<feature type="topological domain" description="Extracellular" evidence="3">
    <location>
        <begin position="270"/>
        <end position="277"/>
    </location>
</feature>
<feature type="transmembrane region" description="Helical" evidence="3">
    <location>
        <begin position="278"/>
        <end position="298"/>
    </location>
</feature>
<feature type="topological domain" description="Cytoplasmic" evidence="3">
    <location>
        <begin position="299"/>
        <end position="351"/>
    </location>
</feature>
<feature type="region of interest" description="Disordered" evidence="4">
    <location>
        <begin position="1"/>
        <end position="39"/>
    </location>
</feature>
<feature type="region of interest" description="Disordered" evidence="4">
    <location>
        <begin position="71"/>
        <end position="141"/>
    </location>
</feature>
<feature type="compositionally biased region" description="Polar residues" evidence="4">
    <location>
        <begin position="1"/>
        <end position="21"/>
    </location>
</feature>
<feature type="compositionally biased region" description="Low complexity" evidence="4">
    <location>
        <begin position="22"/>
        <end position="33"/>
    </location>
</feature>
<feature type="compositionally biased region" description="Low complexity" evidence="4">
    <location>
        <begin position="80"/>
        <end position="93"/>
    </location>
</feature>
<feature type="compositionally biased region" description="Polar residues" evidence="4">
    <location>
        <begin position="94"/>
        <end position="106"/>
    </location>
</feature>
<feature type="site" description="Confers selective permeability to Ca(2+) ions" evidence="2 16">
    <location>
        <position position="178"/>
    </location>
</feature>
<feature type="splice variant" id="VSP_018313" description="In isoform E." evidence="9">
    <original>MSVWTTANNSGLETPTKSPITSSVPRAARSSAVITTGNHQQHHFQHVVAAAVAAATSVATGHQFQQQFPLHAHPHPQHHSNSPTGSGSNSNNSAGFQRTSISNSLLQFPPPPPPSSQNQAK</original>
    <variation>MPPFEEGESKPEEQIPLKPPRRHKKMKSADQEAAQTPAEDHEEEQLLPGSGTSNLRYARANLSQSSLMLSHQQGSFESSTERTASSETLDVMPISRRYQVHPQPNRLGIRQPASALASALHATARLAASVDAYTAAATATAATGDYGDYMRPQPNLGHAHQLPLTQTTQTAQPLHHQLPAHQLGNLRASNFVGSSRYLYHSQFNSNSPQTRRFTAQRDGSPAYAASVAAASAAAAASAVAPIAPLAPLASIASPPFAAQPPPFQLRTYQQNQSYRFQ</variation>
    <location>
        <begin position="1"/>
        <end position="121"/>
    </location>
</feature>
<feature type="splice variant" id="VSP_021772" description="In isoform C." evidence="12">
    <original>PRGHHRTASSS</original>
    <variation>AGRTVQIDCRI</variation>
    <location>
        <begin position="122"/>
        <end position="132"/>
    </location>
</feature>
<feature type="splice variant" id="VSP_021773" description="In isoform C." evidence="12">
    <location>
        <begin position="133"/>
        <end position="351"/>
    </location>
</feature>
<feature type="mutagenesis site" description="Constitutively permeable to Ca(2+) ions in the absence of Stim." evidence="8">
    <original>V</original>
    <variation>A</variation>
    <location>
        <position position="174"/>
    </location>
</feature>
<feature type="mutagenesis site" description="Impairs store-operated Ca(2+) influx." evidence="7">
    <original>E</original>
    <variation>Q</variation>
    <location>
        <position position="178"/>
    </location>
</feature>
<feature type="mutagenesis site" description="Does not affect store-operated Ca(2+) influx." evidence="7">
    <original>E</original>
    <variation>Q</variation>
    <location>
        <position position="221"/>
    </location>
</feature>
<feature type="mutagenesis site" description="Decreases store-operated Ca(2+) influx." evidence="7">
    <original>E</original>
    <variation>Q</variation>
    <location>
        <position position="245"/>
    </location>
</feature>
<feature type="mutagenesis site" description="Impairs store-operated Ca(2+) influx." evidence="7">
    <original>E</original>
    <variation>Q</variation>
    <location>
        <position position="262"/>
    </location>
</feature>
<feature type="sequence conflict" description="In Ref. 1; ABF54966." evidence="13" ref="1">
    <original>A</original>
    <variation>S</variation>
    <location>
        <position position="28"/>
    </location>
</feature>
<feature type="sequence conflict" description="In Ref. 1; ABF54966." evidence="13" ref="1">
    <original>H</original>
    <variation>HPH</variation>
    <location>
        <position position="75"/>
    </location>
</feature>
<feature type="helix" evidence="22">
    <location>
        <begin position="158"/>
        <end position="177"/>
    </location>
</feature>
<feature type="helix" evidence="22">
    <location>
        <begin position="189"/>
        <end position="215"/>
    </location>
</feature>
<feature type="turn" evidence="21">
    <location>
        <begin position="216"/>
        <end position="218"/>
    </location>
</feature>
<feature type="helix" evidence="22">
    <location>
        <begin position="241"/>
        <end position="271"/>
    </location>
</feature>
<feature type="turn" evidence="22">
    <location>
        <begin position="272"/>
        <end position="274"/>
    </location>
</feature>
<feature type="helix" evidence="22">
    <location>
        <begin position="276"/>
        <end position="303"/>
    </location>
</feature>
<feature type="helix" evidence="21">
    <location>
        <begin position="308"/>
        <end position="331"/>
    </location>
</feature>
<sequence length="351" mass="38507">MSVWTTANNSGLETPTKSPITSSVPRAARSSAVITTGNHQQHHFQHVVAAAVAAATSVATGHQFQQQFPLHAHPHPQHHSNSPTGSGSNSNNSAGFQRTSISNSLLQFPPPPPPSSQNQAKPRGHHRTASSSMSQSGEDLHSPTYLSWRKLQLSRAKLKASSKTSALLSGFAMVAMVEVQLDHDTNVPPGMLIAFAICTTLLVAVHMLALMISTCILPNIETVCNLHSISLVHESPHERLHWYIETAWAFSTLLGLILFLLEIAILCWVKFYDLSPPAAWSACVVLIPVMIIFMAFAIHFYRSLVSHKYEVTVSGIRELEMLKEQMEQDHLEHHNNIRNNGMNYGASGDIV</sequence>
<evidence type="ECO:0000250" key="1"/>
<evidence type="ECO:0000250" key="2">
    <source>
        <dbReference type="UniProtKB" id="Q96D31"/>
    </source>
</evidence>
<evidence type="ECO:0000255" key="3"/>
<evidence type="ECO:0000256" key="4">
    <source>
        <dbReference type="SAM" id="MobiDB-lite"/>
    </source>
</evidence>
<evidence type="ECO:0000269" key="5">
    <source>
    </source>
</evidence>
<evidence type="ECO:0000269" key="6">
    <source>
    </source>
</evidence>
<evidence type="ECO:0000269" key="7">
    <source>
    </source>
</evidence>
<evidence type="ECO:0000269" key="8">
    <source>
    </source>
</evidence>
<evidence type="ECO:0000303" key="9">
    <source>
    </source>
</evidence>
<evidence type="ECO:0000303" key="10">
    <source>
    </source>
</evidence>
<evidence type="ECO:0000303" key="11">
    <source>
    </source>
</evidence>
<evidence type="ECO:0000303" key="12">
    <source ref="6"/>
</evidence>
<evidence type="ECO:0000305" key="13"/>
<evidence type="ECO:0000305" key="14">
    <source>
    </source>
</evidence>
<evidence type="ECO:0000305" key="15">
    <source>
    </source>
</evidence>
<evidence type="ECO:0000305" key="16">
    <source>
    </source>
</evidence>
<evidence type="ECO:0000305" key="17">
    <source>
    </source>
</evidence>
<evidence type="ECO:0000312" key="18">
    <source>
        <dbReference type="FlyBase" id="FBgn0041585"/>
    </source>
</evidence>
<evidence type="ECO:0007744" key="19">
    <source>
        <dbReference type="PDB" id="4HKR"/>
    </source>
</evidence>
<evidence type="ECO:0007744" key="20">
    <source>
        <dbReference type="PDB" id="4HKS"/>
    </source>
</evidence>
<evidence type="ECO:0007829" key="21">
    <source>
        <dbReference type="PDB" id="4HKR"/>
    </source>
</evidence>
<evidence type="ECO:0007829" key="22">
    <source>
        <dbReference type="PDB" id="7KR5"/>
    </source>
</evidence>
<name>ORAI1_DROME</name>
<protein>
    <recommendedName>
        <fullName evidence="11 18">Calcium release-activated calcium channel protein 1</fullName>
    </recommendedName>
    <alternativeName>
        <fullName evidence="11 18">Protein orai</fullName>
    </alternativeName>
</protein>
<accession>Q9U6B8</accession>
<accession>B7YZJ7</accession>
<accession>Q0E937</accession>
<accession>Q1HCN1</accession>
<accession>Q7JQY5</accession>
<accession>Q7KRH6</accession>
<accession>Q8IGA6</accession>
<accession>Q9V892</accession>
<comment type="function">
    <text evidence="5 6 7 8">Pore-forming subunit of inward rectifying Ca(2+) release-activated Ca(2+) (CRAC) channels. Assembles in hexameric CRAC channels that mediate Ca(2+) influx upon depletion of endoplasmic reticulum Ca(2+) store and channel activation by Ca(2+) sensor Stim, a process known as store-operated Ca(2+) entry (SOCE). Regulates transcription factor NFAT nuclear import.</text>
</comment>
<comment type="catalytic activity">
    <reaction evidence="5 6 7 8">
        <text>Ca(2+)(in) = Ca(2+)(out)</text>
        <dbReference type="Rhea" id="RHEA:29671"/>
        <dbReference type="ChEBI" id="CHEBI:29108"/>
    </reaction>
    <physiologicalReaction direction="right-to-left" evidence="14 15 16 17">
        <dbReference type="Rhea" id="RHEA:29673"/>
    </physiologicalReaction>
</comment>
<comment type="subunit">
    <text evidence="8">Hexamer.</text>
</comment>
<comment type="interaction">
    <interactant intactId="EBI-118501">
        <id>Q9U6B8</id>
    </interactant>
    <interactant intactId="EBI-118501">
        <id>Q9U6B8</id>
        <label>Orai</label>
    </interactant>
    <organismsDiffer>false</organismsDiffer>
    <experiments>8</experiments>
</comment>
<comment type="interaction">
    <interactant intactId="EBI-118501">
        <id>Q9U6B8</id>
    </interactant>
    <interactant intactId="EBI-109721">
        <id>P83094</id>
        <label>Stim</label>
    </interactant>
    <organismsDiffer>false</organismsDiffer>
    <experiments>4</experiments>
</comment>
<comment type="subcellular location">
    <subcellularLocation>
        <location evidence="1">Cell membrane</location>
        <topology evidence="1">Multi-pass membrane protein</topology>
    </subcellularLocation>
</comment>
<comment type="alternative products">
    <event type="alternative splicing"/>
    <isoform>
        <id>Q9U6B8-1</id>
        <name evidence="18">A</name>
        <name evidence="18">B</name>
        <name evidence="18">F</name>
        <sequence type="displayed"/>
    </isoform>
    <isoform>
        <id>Q9U6B8-3</id>
        <name evidence="18">E</name>
        <name evidence="18">G</name>
        <sequence type="described" ref="VSP_018313"/>
    </isoform>
    <isoform>
        <id>Q9U6B8-4</id>
        <name evidence="13">C</name>
        <sequence type="described" ref="VSP_021772 VSP_021773"/>
    </isoform>
</comment>
<comment type="miscellaneous">
    <text>In Greek mythology, the 'Orai' are the keepers of the gates of heaven: Eunomia (order or harmony), Dike (justice) and Eirene (peace).</text>
</comment>
<comment type="similarity">
    <text evidence="13">Belongs to the Orai family.</text>
</comment>
<keyword id="KW-0002">3D-structure</keyword>
<keyword id="KW-0025">Alternative splicing</keyword>
<keyword id="KW-0106">Calcium</keyword>
<keyword id="KW-0107">Calcium channel</keyword>
<keyword id="KW-0109">Calcium transport</keyword>
<keyword id="KW-1003">Cell membrane</keyword>
<keyword id="KW-0407">Ion channel</keyword>
<keyword id="KW-0406">Ion transport</keyword>
<keyword id="KW-0472">Membrane</keyword>
<keyword id="KW-1185">Reference proteome</keyword>
<keyword id="KW-0812">Transmembrane</keyword>
<keyword id="KW-1133">Transmembrane helix</keyword>
<keyword id="KW-0813">Transport</keyword>
<reference key="1">
    <citation type="journal article" date="2006" name="Proc. Natl. Acad. Sci. U.S.A.">
        <title>Genome-wide RNAi screen of Ca2+ influx identifies genes that regulate Ca2+ release-activated Ca2+ channel activity.</title>
        <authorList>
            <person name="Zhang S.L."/>
            <person name="Yeromin A.V."/>
            <person name="Zhang X.H.-F."/>
            <person name="Yu Y."/>
            <person name="Safrina O."/>
            <person name="Penna A."/>
            <person name="Roos J."/>
            <person name="Stauderman K.A."/>
            <person name="Cahalan M.D."/>
        </authorList>
    </citation>
    <scope>NUCLEOTIDE SEQUENCE [MRNA] (ISOFORM A)</scope>
    <source>
        <tissue>Embryo</tissue>
    </source>
</reference>
<reference key="2">
    <citation type="submission" date="1999-09" db="EMBL/GenBank/DDBJ databases">
        <authorList>
            <person name="Chodagam S."/>
            <person name="Tickoo S."/>
        </authorList>
    </citation>
    <scope>NUCLEOTIDE SEQUENCE [MRNA] (ISOFORM A)</scope>
    <source>
        <strain>Canton-S</strain>
        <tissue>Head</tissue>
    </source>
</reference>
<reference key="3">
    <citation type="journal article" date="2000" name="Science">
        <title>The genome sequence of Drosophila melanogaster.</title>
        <authorList>
            <person name="Adams M.D."/>
            <person name="Celniker S.E."/>
            <person name="Holt R.A."/>
            <person name="Evans C.A."/>
            <person name="Gocayne J.D."/>
            <person name="Amanatides P.G."/>
            <person name="Scherer S.E."/>
            <person name="Li P.W."/>
            <person name="Hoskins R.A."/>
            <person name="Galle R.F."/>
            <person name="George R.A."/>
            <person name="Lewis S.E."/>
            <person name="Richards S."/>
            <person name="Ashburner M."/>
            <person name="Henderson S.N."/>
            <person name="Sutton G.G."/>
            <person name="Wortman J.R."/>
            <person name="Yandell M.D."/>
            <person name="Zhang Q."/>
            <person name="Chen L.X."/>
            <person name="Brandon R.C."/>
            <person name="Rogers Y.-H.C."/>
            <person name="Blazej R.G."/>
            <person name="Champe M."/>
            <person name="Pfeiffer B.D."/>
            <person name="Wan K.H."/>
            <person name="Doyle C."/>
            <person name="Baxter E.G."/>
            <person name="Helt G."/>
            <person name="Nelson C.R."/>
            <person name="Miklos G.L.G."/>
            <person name="Abril J.F."/>
            <person name="Agbayani A."/>
            <person name="An H.-J."/>
            <person name="Andrews-Pfannkoch C."/>
            <person name="Baldwin D."/>
            <person name="Ballew R.M."/>
            <person name="Basu A."/>
            <person name="Baxendale J."/>
            <person name="Bayraktaroglu L."/>
            <person name="Beasley E.M."/>
            <person name="Beeson K.Y."/>
            <person name="Benos P.V."/>
            <person name="Berman B.P."/>
            <person name="Bhandari D."/>
            <person name="Bolshakov S."/>
            <person name="Borkova D."/>
            <person name="Botchan M.R."/>
            <person name="Bouck J."/>
            <person name="Brokstein P."/>
            <person name="Brottier P."/>
            <person name="Burtis K.C."/>
            <person name="Busam D.A."/>
            <person name="Butler H."/>
            <person name="Cadieu E."/>
            <person name="Center A."/>
            <person name="Chandra I."/>
            <person name="Cherry J.M."/>
            <person name="Cawley S."/>
            <person name="Dahlke C."/>
            <person name="Davenport L.B."/>
            <person name="Davies P."/>
            <person name="de Pablos B."/>
            <person name="Delcher A."/>
            <person name="Deng Z."/>
            <person name="Mays A.D."/>
            <person name="Dew I."/>
            <person name="Dietz S.M."/>
            <person name="Dodson K."/>
            <person name="Doup L.E."/>
            <person name="Downes M."/>
            <person name="Dugan-Rocha S."/>
            <person name="Dunkov B.C."/>
            <person name="Dunn P."/>
            <person name="Durbin K.J."/>
            <person name="Evangelista C.C."/>
            <person name="Ferraz C."/>
            <person name="Ferriera S."/>
            <person name="Fleischmann W."/>
            <person name="Fosler C."/>
            <person name="Gabrielian A.E."/>
            <person name="Garg N.S."/>
            <person name="Gelbart W.M."/>
            <person name="Glasser K."/>
            <person name="Glodek A."/>
            <person name="Gong F."/>
            <person name="Gorrell J.H."/>
            <person name="Gu Z."/>
            <person name="Guan P."/>
            <person name="Harris M."/>
            <person name="Harris N.L."/>
            <person name="Harvey D.A."/>
            <person name="Heiman T.J."/>
            <person name="Hernandez J.R."/>
            <person name="Houck J."/>
            <person name="Hostin D."/>
            <person name="Houston K.A."/>
            <person name="Howland T.J."/>
            <person name="Wei M.-H."/>
            <person name="Ibegwam C."/>
            <person name="Jalali M."/>
            <person name="Kalush F."/>
            <person name="Karpen G.H."/>
            <person name="Ke Z."/>
            <person name="Kennison J.A."/>
            <person name="Ketchum K.A."/>
            <person name="Kimmel B.E."/>
            <person name="Kodira C.D."/>
            <person name="Kraft C.L."/>
            <person name="Kravitz S."/>
            <person name="Kulp D."/>
            <person name="Lai Z."/>
            <person name="Lasko P."/>
            <person name="Lei Y."/>
            <person name="Levitsky A.A."/>
            <person name="Li J.H."/>
            <person name="Li Z."/>
            <person name="Liang Y."/>
            <person name="Lin X."/>
            <person name="Liu X."/>
            <person name="Mattei B."/>
            <person name="McIntosh T.C."/>
            <person name="McLeod M.P."/>
            <person name="McPherson D."/>
            <person name="Merkulov G."/>
            <person name="Milshina N.V."/>
            <person name="Mobarry C."/>
            <person name="Morris J."/>
            <person name="Moshrefi A."/>
            <person name="Mount S.M."/>
            <person name="Moy M."/>
            <person name="Murphy B."/>
            <person name="Murphy L."/>
            <person name="Muzny D.M."/>
            <person name="Nelson D.L."/>
            <person name="Nelson D.R."/>
            <person name="Nelson K.A."/>
            <person name="Nixon K."/>
            <person name="Nusskern D.R."/>
            <person name="Pacleb J.M."/>
            <person name="Palazzolo M."/>
            <person name="Pittman G.S."/>
            <person name="Pan S."/>
            <person name="Pollard J."/>
            <person name="Puri V."/>
            <person name="Reese M.G."/>
            <person name="Reinert K."/>
            <person name="Remington K."/>
            <person name="Saunders R.D.C."/>
            <person name="Scheeler F."/>
            <person name="Shen H."/>
            <person name="Shue B.C."/>
            <person name="Siden-Kiamos I."/>
            <person name="Simpson M."/>
            <person name="Skupski M.P."/>
            <person name="Smith T.J."/>
            <person name="Spier E."/>
            <person name="Spradling A.C."/>
            <person name="Stapleton M."/>
            <person name="Strong R."/>
            <person name="Sun E."/>
            <person name="Svirskas R."/>
            <person name="Tector C."/>
            <person name="Turner R."/>
            <person name="Venter E."/>
            <person name="Wang A.H."/>
            <person name="Wang X."/>
            <person name="Wang Z.-Y."/>
            <person name="Wassarman D.A."/>
            <person name="Weinstock G.M."/>
            <person name="Weissenbach J."/>
            <person name="Williams S.M."/>
            <person name="Woodage T."/>
            <person name="Worley K.C."/>
            <person name="Wu D."/>
            <person name="Yang S."/>
            <person name="Yao Q.A."/>
            <person name="Ye J."/>
            <person name="Yeh R.-F."/>
            <person name="Zaveri J.S."/>
            <person name="Zhan M."/>
            <person name="Zhang G."/>
            <person name="Zhao Q."/>
            <person name="Zheng L."/>
            <person name="Zheng X.H."/>
            <person name="Zhong F.N."/>
            <person name="Zhong W."/>
            <person name="Zhou X."/>
            <person name="Zhu S.C."/>
            <person name="Zhu X."/>
            <person name="Smith H.O."/>
            <person name="Gibbs R.A."/>
            <person name="Myers E.W."/>
            <person name="Rubin G.M."/>
            <person name="Venter J.C."/>
        </authorList>
    </citation>
    <scope>NUCLEOTIDE SEQUENCE [LARGE SCALE GENOMIC DNA]</scope>
    <source>
        <strain>Berkeley</strain>
    </source>
</reference>
<reference key="4">
    <citation type="journal article" date="2002" name="Genome Biol.">
        <title>Annotation of the Drosophila melanogaster euchromatic genome: a systematic review.</title>
        <authorList>
            <person name="Misra S."/>
            <person name="Crosby M.A."/>
            <person name="Mungall C.J."/>
            <person name="Matthews B.B."/>
            <person name="Campbell K.S."/>
            <person name="Hradecky P."/>
            <person name="Huang Y."/>
            <person name="Kaminker J.S."/>
            <person name="Millburn G.H."/>
            <person name="Prochnik S.E."/>
            <person name="Smith C.D."/>
            <person name="Tupy J.L."/>
            <person name="Whitfield E.J."/>
            <person name="Bayraktaroglu L."/>
            <person name="Berman B.P."/>
            <person name="Bettencourt B.R."/>
            <person name="Celniker S.E."/>
            <person name="de Grey A.D.N.J."/>
            <person name="Drysdale R.A."/>
            <person name="Harris N.L."/>
            <person name="Richter J."/>
            <person name="Russo S."/>
            <person name="Schroeder A.J."/>
            <person name="Shu S.Q."/>
            <person name="Stapleton M."/>
            <person name="Yamada C."/>
            <person name="Ashburner M."/>
            <person name="Gelbart W.M."/>
            <person name="Rubin G.M."/>
            <person name="Lewis S.E."/>
        </authorList>
    </citation>
    <scope>GENOME REANNOTATION</scope>
    <scope>ALTERNATIVE SPLICING</scope>
    <source>
        <strain>Berkeley</strain>
    </source>
</reference>
<reference key="5">
    <citation type="journal article" date="2002" name="Genome Biol.">
        <title>A Drosophila full-length cDNA resource.</title>
        <authorList>
            <person name="Stapleton M."/>
            <person name="Carlson J.W."/>
            <person name="Brokstein P."/>
            <person name="Yu C."/>
            <person name="Champe M."/>
            <person name="George R.A."/>
            <person name="Guarin H."/>
            <person name="Kronmiller B."/>
            <person name="Pacleb J.M."/>
            <person name="Park S."/>
            <person name="Wan K.H."/>
            <person name="Rubin G.M."/>
            <person name="Celniker S.E."/>
        </authorList>
    </citation>
    <scope>NUCLEOTIDE SEQUENCE [LARGE SCALE MRNA] (ISOFORMS A AND E)</scope>
    <source>
        <strain>Berkeley</strain>
        <tissue>Embryo</tissue>
    </source>
</reference>
<reference key="6">
    <citation type="submission" date="2003-02" db="EMBL/GenBank/DDBJ databases">
        <authorList>
            <person name="Stapleton M."/>
            <person name="Brokstein P."/>
            <person name="Hong L."/>
            <person name="Agbayani A."/>
            <person name="Carlson J.W."/>
            <person name="Champe M."/>
            <person name="Chavez C."/>
            <person name="Dorsett V."/>
            <person name="Dresnek D."/>
            <person name="Farfan D."/>
            <person name="Frise E."/>
            <person name="George R.A."/>
            <person name="Gonzalez M."/>
            <person name="Guarin H."/>
            <person name="Kronmiller B."/>
            <person name="Li P.W."/>
            <person name="Liao G."/>
            <person name="Miranda A."/>
            <person name="Mungall C.J."/>
            <person name="Nunoo J."/>
            <person name="Pacleb J.M."/>
            <person name="Paragas V."/>
            <person name="Park S."/>
            <person name="Patel S."/>
            <person name="Phouanenavong S."/>
            <person name="Wan K.H."/>
            <person name="Yu C."/>
            <person name="Lewis S.E."/>
            <person name="Rubin G.M."/>
            <person name="Celniker S.E."/>
        </authorList>
    </citation>
    <scope>NUCLEOTIDE SEQUENCE [LARGE SCALE MRNA] (ISOFORM C)</scope>
    <source>
        <strain>Berkeley</strain>
        <tissue>Embryo</tissue>
    </source>
</reference>
<reference key="7">
    <citation type="journal article" date="2006" name="Nature">
        <title>A mutation in Orai1 causes immune deficiency by abrogating CRAC channel function.</title>
        <authorList>
            <person name="Feske S."/>
            <person name="Gwack Y."/>
            <person name="Prakriya M."/>
            <person name="Srikanth S."/>
            <person name="Puppel S.-H."/>
            <person name="Tanasa B."/>
            <person name="Hogan P.G."/>
            <person name="Lewis R.S."/>
            <person name="Daly M."/>
            <person name="Rao A."/>
        </authorList>
    </citation>
    <scope>FUNCTION</scope>
    <scope>TRANSPORTER ACTIVITY</scope>
</reference>
<reference key="8">
    <citation type="journal article" date="2006" name="Nature">
        <title>Orai1 is an essential pore subunit of the CRAC channel.</title>
        <authorList>
            <person name="Prakriya M."/>
            <person name="Feske S."/>
            <person name="Gwack Y."/>
            <person name="Srikanth S."/>
            <person name="Rao A."/>
            <person name="Hogan P.G."/>
        </authorList>
    </citation>
    <scope>FUNCTION</scope>
    <scope>TRANSPORTER ACTIVITY</scope>
    <scope>SITE</scope>
    <scope>MUTAGENESIS OF GLU-178; GLU-221; GLU-245 AND GLU-262</scope>
</reference>
<reference key="9">
    <citation type="journal article" date="2006" name="Science">
        <title>CRACM1 is a plasma membrane protein essential for store-operated Ca2+ entry.</title>
        <authorList>
            <person name="Vig M."/>
            <person name="Peinelt C."/>
            <person name="Beck A."/>
            <person name="Koomoa D.L."/>
            <person name="Rabah D."/>
            <person name="Koblan-Huberson M."/>
            <person name="Kraft S."/>
            <person name="Turner H."/>
            <person name="Fleig A."/>
            <person name="Penner R."/>
            <person name="Kinet J.-P."/>
        </authorList>
    </citation>
    <scope>FUNCTION</scope>
    <scope>TRANSPORTER ACTIVITY</scope>
</reference>
<reference evidence="19 20" key="10">
    <citation type="journal article" date="2012" name="Science">
        <title>Crystal structure of the calcium release-activated calcium channel Orai.</title>
        <authorList>
            <person name="Hou X."/>
            <person name="Pedi L."/>
            <person name="Diver M.M."/>
            <person name="Long S.B."/>
        </authorList>
    </citation>
    <scope>X-RAY CRYSTALLOGRAPHY (3.35 ANGSTROMS) OF 133-341</scope>
    <scope>FUNCTION</scope>
    <scope>TRANSPORTER ACTIVITY</scope>
    <scope>SUBUNIT</scope>
    <scope>MUTAGENESIS OF VAL-174</scope>
</reference>
<dbReference type="EMBL" id="DQ503470">
    <property type="protein sequence ID" value="ABF54966.1"/>
    <property type="molecule type" value="mRNA"/>
</dbReference>
<dbReference type="EMBL" id="AF188634">
    <property type="protein sequence ID" value="AAF01457.1"/>
    <property type="molecule type" value="mRNA"/>
</dbReference>
<dbReference type="EMBL" id="AE013599">
    <property type="protein sequence ID" value="AAF57780.2"/>
    <property type="molecule type" value="Genomic_DNA"/>
</dbReference>
<dbReference type="EMBL" id="AE013599">
    <property type="protein sequence ID" value="AAS64814.2"/>
    <property type="molecule type" value="Genomic_DNA"/>
</dbReference>
<dbReference type="EMBL" id="AE013599">
    <property type="protein sequence ID" value="ACL83150.1"/>
    <property type="molecule type" value="Genomic_DNA"/>
</dbReference>
<dbReference type="EMBL" id="AE013599">
    <property type="protein sequence ID" value="AGB93595.1"/>
    <property type="molecule type" value="Genomic_DNA"/>
</dbReference>
<dbReference type="EMBL" id="AY071273">
    <property type="protein sequence ID" value="AAL48895.1"/>
    <property type="molecule type" value="mRNA"/>
</dbReference>
<dbReference type="EMBL" id="BT001876">
    <property type="protein sequence ID" value="AAN71648.1"/>
    <property type="molecule type" value="mRNA"/>
</dbReference>
<dbReference type="EMBL" id="BT003591">
    <property type="protein sequence ID" value="AAO39594.1"/>
    <property type="molecule type" value="mRNA"/>
</dbReference>
<dbReference type="RefSeq" id="NP_001137696.1">
    <molecule id="Q9U6B8-3"/>
    <property type="nucleotide sequence ID" value="NM_001144224.2"/>
</dbReference>
<dbReference type="RefSeq" id="NP_001261063.1">
    <molecule id="Q9U6B8-3"/>
    <property type="nucleotide sequence ID" value="NM_001274134.1"/>
</dbReference>
<dbReference type="RefSeq" id="NP_611273.1">
    <molecule id="Q9U6B8-1"/>
    <property type="nucleotide sequence ID" value="NM_137429.3"/>
</dbReference>
<dbReference type="RefSeq" id="NP_725727.1">
    <molecule id="Q9U6B8-1"/>
    <property type="nucleotide sequence ID" value="NM_170626.2"/>
</dbReference>
<dbReference type="RefSeq" id="NP_995881.2">
    <molecule id="Q9U6B8-1"/>
    <property type="nucleotide sequence ID" value="NM_206159.2"/>
</dbReference>
<dbReference type="PDB" id="4HKR">
    <property type="method" value="X-ray"/>
    <property type="resolution" value="3.35 A"/>
    <property type="chains" value="A/B=133-341"/>
</dbReference>
<dbReference type="PDB" id="4HKS">
    <property type="method" value="X-ray"/>
    <property type="resolution" value="3.35 A"/>
    <property type="chains" value="A/B=133-341"/>
</dbReference>
<dbReference type="PDB" id="6AKI">
    <property type="method" value="X-ray"/>
    <property type="resolution" value="4.50 A"/>
    <property type="chains" value="A/B/C/D/E/F/O/P/Q/R/S/T=132-341"/>
</dbReference>
<dbReference type="PDB" id="6BBF">
    <property type="method" value="X-ray"/>
    <property type="resolution" value="6.71 A"/>
    <property type="chains" value="A/B/C/D/E/F/G/H/I/J/K/L/M/N/O/P/Q/R/S/T/U/V/W/X=133-341"/>
</dbReference>
<dbReference type="PDB" id="6BBG">
    <property type="method" value="X-ray"/>
    <property type="resolution" value="6.90 A"/>
    <property type="chains" value="A/B/C/D/E/F/G/H/I/J/K/L/M/N/O/P/Q/R/S/T/U/V/W/X=133-341"/>
</dbReference>
<dbReference type="PDB" id="6BBH">
    <property type="method" value="X-ray"/>
    <property type="resolution" value="6.10 A"/>
    <property type="chains" value="A/B/C/D/E/F/G/H/I/J/K/L/M/N/O/P/Q/R/S/T/U/V/W/X=133-341"/>
</dbReference>
<dbReference type="PDB" id="6BBI">
    <property type="method" value="X-ray"/>
    <property type="resolution" value="4.35 A"/>
    <property type="chains" value="A/B/C=133-341"/>
</dbReference>
<dbReference type="PDB" id="7KR5">
    <property type="method" value="EM"/>
    <property type="resolution" value="3.30 A"/>
    <property type="chains" value="A/B/C/D/E/F=133-341"/>
</dbReference>
<dbReference type="PDBsum" id="4HKR"/>
<dbReference type="PDBsum" id="4HKS"/>
<dbReference type="PDBsum" id="6AKI"/>
<dbReference type="PDBsum" id="6BBF"/>
<dbReference type="PDBsum" id="6BBG"/>
<dbReference type="PDBsum" id="6BBH"/>
<dbReference type="PDBsum" id="6BBI"/>
<dbReference type="PDBsum" id="7KR5"/>
<dbReference type="EMDB" id="EMD-23002"/>
<dbReference type="SMR" id="Q9U6B8"/>
<dbReference type="BioGRID" id="62725">
    <property type="interactions" value="7"/>
</dbReference>
<dbReference type="ComplexPortal" id="CPX-2402">
    <property type="entry name" value="Calcium release-activated calcium channel"/>
</dbReference>
<dbReference type="DIP" id="DIP-59770N"/>
<dbReference type="FunCoup" id="Q9U6B8">
    <property type="interactions" value="654"/>
</dbReference>
<dbReference type="IntAct" id="Q9U6B8">
    <property type="interactions" value="5"/>
</dbReference>
<dbReference type="STRING" id="7227.FBpp0307680"/>
<dbReference type="TCDB" id="1.A.52.1.5">
    <property type="family name" value="the ca(2+) release-activated ca(2+) (crac) channel (crac-c) family"/>
</dbReference>
<dbReference type="PaxDb" id="7227-FBpp0113106"/>
<dbReference type="DNASU" id="37040"/>
<dbReference type="EnsemblMetazoa" id="FBtr0086795">
    <molecule id="Q9U6B8-1"/>
    <property type="protein sequence ID" value="FBpp0085974"/>
    <property type="gene ID" value="FBgn0041585"/>
</dbReference>
<dbReference type="EnsemblMetazoa" id="FBtr0086797">
    <molecule id="Q9U6B8-1"/>
    <property type="protein sequence ID" value="FBpp0085976"/>
    <property type="gene ID" value="FBgn0041585"/>
</dbReference>
<dbReference type="EnsemblMetazoa" id="FBtr0114614">
    <molecule id="Q9U6B8-3"/>
    <property type="protein sequence ID" value="FBpp0113106"/>
    <property type="gene ID" value="FBgn0041585"/>
</dbReference>
<dbReference type="EnsemblMetazoa" id="FBtr0336698">
    <molecule id="Q9U6B8-1"/>
    <property type="protein sequence ID" value="FBpp0307679"/>
    <property type="gene ID" value="FBgn0041585"/>
</dbReference>
<dbReference type="EnsemblMetazoa" id="FBtr0336699">
    <molecule id="Q9U6B8-3"/>
    <property type="protein sequence ID" value="FBpp0307680"/>
    <property type="gene ID" value="FBgn0041585"/>
</dbReference>
<dbReference type="GeneID" id="37040"/>
<dbReference type="KEGG" id="dme:Dmel_CG11430"/>
<dbReference type="AGR" id="FB:FBgn0041585"/>
<dbReference type="CTD" id="37040"/>
<dbReference type="FlyBase" id="FBgn0041585">
    <property type="gene designation" value="Orai"/>
</dbReference>
<dbReference type="VEuPathDB" id="VectorBase:FBgn0041585"/>
<dbReference type="eggNOG" id="KOG4298">
    <property type="taxonomic scope" value="Eukaryota"/>
</dbReference>
<dbReference type="GeneTree" id="ENSGT00390000015354"/>
<dbReference type="HOGENOM" id="CLU_062509_0_0_1"/>
<dbReference type="InParanoid" id="Q9U6B8"/>
<dbReference type="OMA" id="VMIVFMA"/>
<dbReference type="OrthoDB" id="61124at2759"/>
<dbReference type="BioGRID-ORCS" id="37040">
    <property type="hits" value="0 hits in 3 CRISPR screens"/>
</dbReference>
<dbReference type="EvolutionaryTrace" id="Q9U6B8"/>
<dbReference type="GenomeRNAi" id="37040"/>
<dbReference type="PRO" id="PR:Q9U6B8"/>
<dbReference type="Proteomes" id="UP000000803">
    <property type="component" value="Chromosome 2R"/>
</dbReference>
<dbReference type="Bgee" id="FBgn0041585">
    <property type="expression patterns" value="Expressed in adult Malpighian tubule principal cell of initial segment in Malpighian tubule and 247 other cell types or tissues"/>
</dbReference>
<dbReference type="ExpressionAtlas" id="Q9U6B8">
    <property type="expression patterns" value="baseline and differential"/>
</dbReference>
<dbReference type="GO" id="GO:0034704">
    <property type="term" value="C:calcium channel complex"/>
    <property type="evidence" value="ECO:0000314"/>
    <property type="project" value="FlyBase"/>
</dbReference>
<dbReference type="GO" id="GO:0016020">
    <property type="term" value="C:membrane"/>
    <property type="evidence" value="ECO:0000318"/>
    <property type="project" value="GO_Central"/>
</dbReference>
<dbReference type="GO" id="GO:0005886">
    <property type="term" value="C:plasma membrane"/>
    <property type="evidence" value="ECO:0000304"/>
    <property type="project" value="Reactome"/>
</dbReference>
<dbReference type="GO" id="GO:0005262">
    <property type="term" value="F:calcium channel activity"/>
    <property type="evidence" value="ECO:0000314"/>
    <property type="project" value="FlyBase"/>
</dbReference>
<dbReference type="GO" id="GO:0005246">
    <property type="term" value="F:calcium channel regulator activity"/>
    <property type="evidence" value="ECO:0000250"/>
    <property type="project" value="FlyBase"/>
</dbReference>
<dbReference type="GO" id="GO:0042802">
    <property type="term" value="F:identical protein binding"/>
    <property type="evidence" value="ECO:0000353"/>
    <property type="project" value="IntAct"/>
</dbReference>
<dbReference type="GO" id="GO:0015279">
    <property type="term" value="F:store-operated calcium channel activity"/>
    <property type="evidence" value="ECO:0000314"/>
    <property type="project" value="UniProtKB"/>
</dbReference>
<dbReference type="GO" id="GO:0070588">
    <property type="term" value="P:calcium ion transmembrane transport"/>
    <property type="evidence" value="ECO:0000314"/>
    <property type="project" value="FlyBase"/>
</dbReference>
<dbReference type="GO" id="GO:0070886">
    <property type="term" value="P:positive regulation of calcineurin-NFAT signaling cascade"/>
    <property type="evidence" value="ECO:0000315"/>
    <property type="project" value="UniProtKB"/>
</dbReference>
<dbReference type="GO" id="GO:0051928">
    <property type="term" value="P:positive regulation of calcium ion transport"/>
    <property type="evidence" value="ECO:0000315"/>
    <property type="project" value="UniProtKB"/>
</dbReference>
<dbReference type="GO" id="GO:0002115">
    <property type="term" value="P:store-operated calcium entry"/>
    <property type="evidence" value="ECO:0000314"/>
    <property type="project" value="UniProtKB"/>
</dbReference>
<dbReference type="FunFam" id="1.20.140.140:FF:000002">
    <property type="entry name" value="Uncharacterized protein, isoform B"/>
    <property type="match status" value="1"/>
</dbReference>
<dbReference type="Gene3D" id="1.20.140.140">
    <property type="entry name" value="Calcium release-activated calcium channel protein Orai"/>
    <property type="match status" value="1"/>
</dbReference>
<dbReference type="InterPro" id="IPR012446">
    <property type="entry name" value="CRAC_channel"/>
</dbReference>
<dbReference type="InterPro" id="IPR038350">
    <property type="entry name" value="Orai_sf"/>
</dbReference>
<dbReference type="PANTHER" id="PTHR31501">
    <property type="entry name" value="CALCIUM RELEASE-ACTIVATED CALCIUM CHANNEL PROTEIN 1"/>
    <property type="match status" value="1"/>
</dbReference>
<dbReference type="PANTHER" id="PTHR31501:SF7">
    <property type="entry name" value="CALCIUM RELEASE-ACTIVATED CALCIUM CHANNEL PROTEIN 1"/>
    <property type="match status" value="1"/>
</dbReference>
<dbReference type="Pfam" id="PF07856">
    <property type="entry name" value="Orai-1"/>
    <property type="match status" value="1"/>
</dbReference>
<organism>
    <name type="scientific">Drosophila melanogaster</name>
    <name type="common">Fruit fly</name>
    <dbReference type="NCBI Taxonomy" id="7227"/>
    <lineage>
        <taxon>Eukaryota</taxon>
        <taxon>Metazoa</taxon>
        <taxon>Ecdysozoa</taxon>
        <taxon>Arthropoda</taxon>
        <taxon>Hexapoda</taxon>
        <taxon>Insecta</taxon>
        <taxon>Pterygota</taxon>
        <taxon>Neoptera</taxon>
        <taxon>Endopterygota</taxon>
        <taxon>Diptera</taxon>
        <taxon>Brachycera</taxon>
        <taxon>Muscomorpha</taxon>
        <taxon>Ephydroidea</taxon>
        <taxon>Drosophilidae</taxon>
        <taxon>Drosophila</taxon>
        <taxon>Sophophora</taxon>
    </lineage>
</organism>
<gene>
    <name evidence="11 18" type="primary">Orai</name>
    <name evidence="10" type="synonym">CRACM1</name>
    <name evidence="11" type="synonym">olf186-F</name>
    <name evidence="18" type="ORF">CG11430</name>
</gene>
<proteinExistence type="evidence at protein level"/>